<organism>
    <name type="scientific">Mus musculus</name>
    <name type="common">Mouse</name>
    <dbReference type="NCBI Taxonomy" id="10090"/>
    <lineage>
        <taxon>Eukaryota</taxon>
        <taxon>Metazoa</taxon>
        <taxon>Chordata</taxon>
        <taxon>Craniata</taxon>
        <taxon>Vertebrata</taxon>
        <taxon>Euteleostomi</taxon>
        <taxon>Mammalia</taxon>
        <taxon>Eutheria</taxon>
        <taxon>Euarchontoglires</taxon>
        <taxon>Glires</taxon>
        <taxon>Rodentia</taxon>
        <taxon>Myomorpha</taxon>
        <taxon>Muroidea</taxon>
        <taxon>Muridae</taxon>
        <taxon>Murinae</taxon>
        <taxon>Mus</taxon>
        <taxon>Mus</taxon>
    </lineage>
</organism>
<gene>
    <name evidence="6" type="primary">Mrgpra2b</name>
    <name type="synonym">Mrga2</name>
    <name evidence="6" type="synonym">Mrgpra2</name>
</gene>
<sequence length="305" mass="34427">MDETLPGSINIRILIPKLMIIIFGLVGLMGNAIVFWLLGFHLRRNAFSVYILNLALADFLFLLSSIIASTLFLLKVSYLSIIFHLCFNTIMMVVYITGISMLSAISTECCLSVLCPTWYRCHRPVHTSTVMCAVIWVLSLLICILNSYFCAVLHTRYDNDNECLATNIFTASYMIFLLVVLCLSSLALLARLFCGAGQMKLTRFHVTILLTLLVFLLCGLPFVIYCILLFKIKDDFHVLDVNFYLALEVLTAINSCANPIIYFFVGSFRHQLKHQTLKMVLQSALQDTPETAENMVEMSSNKAEP</sequence>
<comment type="function">
    <text evidence="1">Orphan receptor. May be a receptor for RFamide-family neuropeptides such as NPFF and NPAF, which are analgesic in vivo. May regulate nociceptor function and/or development, including the sensation or modulation of pain (By similarity).</text>
</comment>
<comment type="subcellular location">
    <subcellularLocation>
        <location>Cell membrane</location>
        <topology>Multi-pass membrane protein</topology>
    </subcellularLocation>
</comment>
<comment type="tissue specificity">
    <text evidence="4">Expressed in a subset of sensory neurons that includes nociceptors. Expressed in the subclass of non-peptidergic sensory neurons that are IB4(+) and VR1(-).</text>
</comment>
<comment type="similarity">
    <text evidence="3">Belongs to the G-protein coupled receptor 1 family. Mas subfamily.</text>
</comment>
<comment type="sequence caution" evidence="5">
    <conflict type="erroneous initiation">
        <sequence resource="EMBL-CDS" id="AAH64040"/>
    </conflict>
</comment>
<feature type="chain" id="PRO_0000069748" description="Mas-related G-protein coupled receptor member A2B">
    <location>
        <begin position="1"/>
        <end position="305"/>
    </location>
</feature>
<feature type="topological domain" description="Extracellular" evidence="2">
    <location>
        <begin position="1"/>
        <end position="17"/>
    </location>
</feature>
<feature type="transmembrane region" description="Helical; Name=1" evidence="2">
    <location>
        <begin position="18"/>
        <end position="38"/>
    </location>
</feature>
<feature type="topological domain" description="Cytoplasmic" evidence="2">
    <location>
        <begin position="39"/>
        <end position="53"/>
    </location>
</feature>
<feature type="transmembrane region" description="Helical; Name=2" evidence="2">
    <location>
        <begin position="54"/>
        <end position="74"/>
    </location>
</feature>
<feature type="topological domain" description="Extracellular" evidence="2">
    <location>
        <begin position="75"/>
        <end position="78"/>
    </location>
</feature>
<feature type="transmembrane region" description="Helical; Name=3" evidence="2">
    <location>
        <begin position="79"/>
        <end position="99"/>
    </location>
</feature>
<feature type="topological domain" description="Cytoplasmic" evidence="2">
    <location>
        <begin position="100"/>
        <end position="132"/>
    </location>
</feature>
<feature type="transmembrane region" description="Helical; Name=4" evidence="2">
    <location>
        <begin position="133"/>
        <end position="153"/>
    </location>
</feature>
<feature type="topological domain" description="Extracellular" evidence="2">
    <location>
        <begin position="154"/>
        <end position="167"/>
    </location>
</feature>
<feature type="transmembrane region" description="Helical; Name=5" evidence="2">
    <location>
        <begin position="168"/>
        <end position="188"/>
    </location>
</feature>
<feature type="topological domain" description="Cytoplasmic" evidence="2">
    <location>
        <begin position="189"/>
        <end position="207"/>
    </location>
</feature>
<feature type="transmembrane region" description="Helical; Name=6" evidence="2">
    <location>
        <begin position="208"/>
        <end position="228"/>
    </location>
</feature>
<feature type="topological domain" description="Extracellular" evidence="2">
    <location>
        <begin position="229"/>
        <end position="244"/>
    </location>
</feature>
<feature type="transmembrane region" description="Helical; Name=7" evidence="2">
    <location>
        <begin position="245"/>
        <end position="265"/>
    </location>
</feature>
<feature type="topological domain" description="Cytoplasmic" evidence="2">
    <location>
        <begin position="266"/>
        <end position="305"/>
    </location>
</feature>
<feature type="sequence conflict" description="In Ref. 2; AAH64040." evidence="5" ref="2">
    <original>M</original>
    <variation>I</variation>
    <location>
        <position position="91"/>
    </location>
</feature>
<feature type="sequence conflict" description="In Ref. 2; AAH64040." evidence="5" ref="2">
    <original>F</original>
    <variation>L</variation>
    <location>
        <position position="243"/>
    </location>
</feature>
<feature type="sequence conflict" description="In Ref. 2; AAH64040." evidence="5" ref="2">
    <original>Q</original>
    <variation>R</variation>
    <location>
        <position position="271"/>
    </location>
</feature>
<evidence type="ECO:0000250" key="1"/>
<evidence type="ECO:0000255" key="2"/>
<evidence type="ECO:0000255" key="3">
    <source>
        <dbReference type="PROSITE-ProRule" id="PRU00521"/>
    </source>
</evidence>
<evidence type="ECO:0000269" key="4">
    <source>
    </source>
</evidence>
<evidence type="ECO:0000305" key="5"/>
<evidence type="ECO:0000312" key="6">
    <source>
        <dbReference type="MGI" id="MGI:3033098"/>
    </source>
</evidence>
<reference key="1">
    <citation type="journal article" date="2001" name="Cell">
        <title>A diverse family of GPCRs expressed in specific subsets of nociceptive sensory neurons.</title>
        <authorList>
            <person name="Dong X."/>
            <person name="Han S.-K."/>
            <person name="Zylka M.J."/>
            <person name="Simon M.I."/>
            <person name="Anderson D.J."/>
        </authorList>
    </citation>
    <scope>NUCLEOTIDE SEQUENCE [MRNA]</scope>
    <scope>TISSUE SPECIFICITY</scope>
    <source>
        <strain>C57BL/6J</strain>
        <tissue>Spinal ganglion</tissue>
    </source>
</reference>
<reference key="2">
    <citation type="journal article" date="2004" name="Genome Res.">
        <title>The status, quality, and expansion of the NIH full-length cDNA project: the Mammalian Gene Collection (MGC).</title>
        <authorList>
            <consortium name="The MGC Project Team"/>
        </authorList>
    </citation>
    <scope>NUCLEOTIDE SEQUENCE [LARGE SCALE MRNA]</scope>
    <source>
        <strain>C57BL/6J</strain>
        <tissue>Thymus</tissue>
    </source>
</reference>
<name>MRGA2_MOUSE</name>
<proteinExistence type="evidence at transcript level"/>
<accession>Q91WW4</accession>
<accession>Q6P3D5</accession>
<protein>
    <recommendedName>
        <fullName evidence="6">Mas-related G-protein coupled receptor member A2B</fullName>
    </recommendedName>
    <alternativeName>
        <fullName evidence="6">Mas-related G-protein coupled receptor member A2</fullName>
    </alternativeName>
</protein>
<dbReference type="EMBL" id="AY042192">
    <property type="protein sequence ID" value="AAK91788.1"/>
    <property type="molecule type" value="mRNA"/>
</dbReference>
<dbReference type="EMBL" id="BC064040">
    <property type="protein sequence ID" value="AAH64040.1"/>
    <property type="status" value="ALT_INIT"/>
    <property type="molecule type" value="mRNA"/>
</dbReference>
<dbReference type="RefSeq" id="NP_001166059.1">
    <property type="nucleotide sequence ID" value="NM_001172588.1"/>
</dbReference>
<dbReference type="RefSeq" id="NP_694741.2">
    <property type="nucleotide sequence ID" value="NM_153101.3"/>
</dbReference>
<dbReference type="SMR" id="Q91WW4"/>
<dbReference type="FunCoup" id="Q91WW4">
    <property type="interactions" value="28"/>
</dbReference>
<dbReference type="STRING" id="10090.ENSMUSP00000113310"/>
<dbReference type="PaxDb" id="10090-ENSMUSP00000113310"/>
<dbReference type="DNASU" id="235712"/>
<dbReference type="GeneID" id="235712"/>
<dbReference type="GeneID" id="668727"/>
<dbReference type="KEGG" id="mmu:235712"/>
<dbReference type="KEGG" id="mmu:668727"/>
<dbReference type="AGR" id="MGI:3033098"/>
<dbReference type="CTD" id="235712"/>
<dbReference type="CTD" id="668727"/>
<dbReference type="MGI" id="MGI:3033098">
    <property type="gene designation" value="Mrgpra2b"/>
</dbReference>
<dbReference type="eggNOG" id="ENOG502RTWA">
    <property type="taxonomic scope" value="Eukaryota"/>
</dbReference>
<dbReference type="InParanoid" id="Q91WW4"/>
<dbReference type="OrthoDB" id="6091802at2759"/>
<dbReference type="PhylomeDB" id="Q91WW4"/>
<dbReference type="TreeFam" id="TF336336"/>
<dbReference type="BioGRID-ORCS" id="235712">
    <property type="hits" value="2 hits in 43 CRISPR screens"/>
</dbReference>
<dbReference type="BioGRID-ORCS" id="668727">
    <property type="hits" value="6 hits in 44 CRISPR screens"/>
</dbReference>
<dbReference type="PRO" id="PR:Q91WW4"/>
<dbReference type="Proteomes" id="UP000000589">
    <property type="component" value="Unplaced"/>
</dbReference>
<dbReference type="RNAct" id="Q91WW4">
    <property type="molecule type" value="protein"/>
</dbReference>
<dbReference type="GO" id="GO:0005886">
    <property type="term" value="C:plasma membrane"/>
    <property type="evidence" value="ECO:0007669"/>
    <property type="project" value="UniProtKB-SubCell"/>
</dbReference>
<dbReference type="GO" id="GO:0004930">
    <property type="term" value="F:G protein-coupled receptor activity"/>
    <property type="evidence" value="ECO:0007669"/>
    <property type="project" value="UniProtKB-KW"/>
</dbReference>
<dbReference type="FunFam" id="1.20.1070.10:FF:000140">
    <property type="entry name" value="Mas-related G-protein coupled receptor member X2"/>
    <property type="match status" value="1"/>
</dbReference>
<dbReference type="Gene3D" id="1.20.1070.10">
    <property type="entry name" value="Rhodopsin 7-helix transmembrane proteins"/>
    <property type="match status" value="1"/>
</dbReference>
<dbReference type="InterPro" id="IPR000276">
    <property type="entry name" value="GPCR_Rhodpsn"/>
</dbReference>
<dbReference type="InterPro" id="IPR017452">
    <property type="entry name" value="GPCR_Rhodpsn_7TM"/>
</dbReference>
<dbReference type="InterPro" id="IPR026233">
    <property type="entry name" value="MRGPCRA"/>
</dbReference>
<dbReference type="InterPro" id="IPR026234">
    <property type="entry name" value="MRGPCRFAMILY"/>
</dbReference>
<dbReference type="PANTHER" id="PTHR11334">
    <property type="entry name" value="MAS-RELATED G-PROTEIN COUPLED RECEPTOR"/>
    <property type="match status" value="1"/>
</dbReference>
<dbReference type="PANTHER" id="PTHR11334:SF33">
    <property type="entry name" value="MAS-RELATED GPR, MEMBER A2A-RELATED"/>
    <property type="match status" value="1"/>
</dbReference>
<dbReference type="Pfam" id="PF00001">
    <property type="entry name" value="7tm_1"/>
    <property type="match status" value="1"/>
</dbReference>
<dbReference type="PRINTS" id="PR00237">
    <property type="entry name" value="GPCRRHODOPSN"/>
</dbReference>
<dbReference type="PRINTS" id="PR02109">
    <property type="entry name" value="MRGPCRA"/>
</dbReference>
<dbReference type="PRINTS" id="PR02108">
    <property type="entry name" value="MRGPCRFAMILY"/>
</dbReference>
<dbReference type="SUPFAM" id="SSF81321">
    <property type="entry name" value="Family A G protein-coupled receptor-like"/>
    <property type="match status" value="1"/>
</dbReference>
<dbReference type="PROSITE" id="PS50262">
    <property type="entry name" value="G_PROTEIN_RECEP_F1_2"/>
    <property type="match status" value="1"/>
</dbReference>
<keyword id="KW-1003">Cell membrane</keyword>
<keyword id="KW-0297">G-protein coupled receptor</keyword>
<keyword id="KW-0472">Membrane</keyword>
<keyword id="KW-0675">Receptor</keyword>
<keyword id="KW-1185">Reference proteome</keyword>
<keyword id="KW-0807">Transducer</keyword>
<keyword id="KW-0812">Transmembrane</keyword>
<keyword id="KW-1133">Transmembrane helix</keyword>